<feature type="chain" id="PRO_0000176589" description="Transcription antitermination protein NusB">
    <location>
        <begin position="1"/>
        <end position="142"/>
    </location>
</feature>
<organism>
    <name type="scientific">Streptococcus mutans serotype c (strain ATCC 700610 / UA159)</name>
    <dbReference type="NCBI Taxonomy" id="210007"/>
    <lineage>
        <taxon>Bacteria</taxon>
        <taxon>Bacillati</taxon>
        <taxon>Bacillota</taxon>
        <taxon>Bacilli</taxon>
        <taxon>Lactobacillales</taxon>
        <taxon>Streptococcaceae</taxon>
        <taxon>Streptococcus</taxon>
    </lineage>
</organism>
<name>NUSB_STRMU</name>
<accession>Q8DSE9</accession>
<evidence type="ECO:0000255" key="1">
    <source>
        <dbReference type="HAMAP-Rule" id="MF_00073"/>
    </source>
</evidence>
<gene>
    <name evidence="1" type="primary">nusB</name>
    <name type="ordered locus">SMU_1845</name>
</gene>
<comment type="function">
    <text evidence="1">Involved in transcription antitermination. Required for transcription of ribosomal RNA (rRNA) genes. Binds specifically to the boxA antiterminator sequence of the ribosomal RNA (rrn) operons.</text>
</comment>
<comment type="similarity">
    <text evidence="1">Belongs to the NusB family.</text>
</comment>
<proteinExistence type="inferred from homology"/>
<protein>
    <recommendedName>
        <fullName evidence="1">Transcription antitermination protein NusB</fullName>
    </recommendedName>
    <alternativeName>
        <fullName evidence="1">Antitermination factor NusB</fullName>
    </alternativeName>
</protein>
<dbReference type="EMBL" id="AE014133">
    <property type="protein sequence ID" value="AAN59467.1"/>
    <property type="molecule type" value="Genomic_DNA"/>
</dbReference>
<dbReference type="RefSeq" id="NP_722161.1">
    <property type="nucleotide sequence ID" value="NC_004350.2"/>
</dbReference>
<dbReference type="RefSeq" id="WP_002262660.1">
    <property type="nucleotide sequence ID" value="NC_004350.2"/>
</dbReference>
<dbReference type="SMR" id="Q8DSE9"/>
<dbReference type="STRING" id="210007.SMU_1845"/>
<dbReference type="GeneID" id="93858740"/>
<dbReference type="KEGG" id="smu:SMU_1845"/>
<dbReference type="PATRIC" id="fig|210007.7.peg.1647"/>
<dbReference type="eggNOG" id="COG0781">
    <property type="taxonomic scope" value="Bacteria"/>
</dbReference>
<dbReference type="HOGENOM" id="CLU_087843_3_2_9"/>
<dbReference type="OrthoDB" id="9811381at2"/>
<dbReference type="PhylomeDB" id="Q8DSE9"/>
<dbReference type="Proteomes" id="UP000002512">
    <property type="component" value="Chromosome"/>
</dbReference>
<dbReference type="GO" id="GO:0005829">
    <property type="term" value="C:cytosol"/>
    <property type="evidence" value="ECO:0007669"/>
    <property type="project" value="TreeGrafter"/>
</dbReference>
<dbReference type="GO" id="GO:0003723">
    <property type="term" value="F:RNA binding"/>
    <property type="evidence" value="ECO:0007669"/>
    <property type="project" value="UniProtKB-UniRule"/>
</dbReference>
<dbReference type="GO" id="GO:0006353">
    <property type="term" value="P:DNA-templated transcription termination"/>
    <property type="evidence" value="ECO:0007669"/>
    <property type="project" value="UniProtKB-UniRule"/>
</dbReference>
<dbReference type="GO" id="GO:0031564">
    <property type="term" value="P:transcription antitermination"/>
    <property type="evidence" value="ECO:0007669"/>
    <property type="project" value="UniProtKB-KW"/>
</dbReference>
<dbReference type="Gene3D" id="1.10.940.10">
    <property type="entry name" value="NusB-like"/>
    <property type="match status" value="1"/>
</dbReference>
<dbReference type="HAMAP" id="MF_00073">
    <property type="entry name" value="NusB"/>
    <property type="match status" value="1"/>
</dbReference>
<dbReference type="InterPro" id="IPR035926">
    <property type="entry name" value="NusB-like_sf"/>
</dbReference>
<dbReference type="InterPro" id="IPR011605">
    <property type="entry name" value="NusB_fam"/>
</dbReference>
<dbReference type="InterPro" id="IPR006027">
    <property type="entry name" value="NusB_RsmB_TIM44"/>
</dbReference>
<dbReference type="NCBIfam" id="TIGR01951">
    <property type="entry name" value="nusB"/>
    <property type="match status" value="1"/>
</dbReference>
<dbReference type="NCBIfam" id="NF001223">
    <property type="entry name" value="PRK00202.1-1"/>
    <property type="match status" value="1"/>
</dbReference>
<dbReference type="PANTHER" id="PTHR11078:SF3">
    <property type="entry name" value="ANTITERMINATION NUSB DOMAIN-CONTAINING PROTEIN"/>
    <property type="match status" value="1"/>
</dbReference>
<dbReference type="PANTHER" id="PTHR11078">
    <property type="entry name" value="N UTILIZATION SUBSTANCE PROTEIN B-RELATED"/>
    <property type="match status" value="1"/>
</dbReference>
<dbReference type="Pfam" id="PF01029">
    <property type="entry name" value="NusB"/>
    <property type="match status" value="1"/>
</dbReference>
<dbReference type="SUPFAM" id="SSF48013">
    <property type="entry name" value="NusB-like"/>
    <property type="match status" value="1"/>
</dbReference>
<sequence length="142" mass="16521">MTNVFVDSRRDLRERAFQALFSLEFGGDNLTAARFAYTYDKNEEEEAELPLFLLTLIQGVSDCRREIDKNISIHLKSGWTLSRLTLIDKSLLRLGLYEIKYHKETPERVALNEIIEIAKKYSDEKSSKFINGVLSQFVLERK</sequence>
<keyword id="KW-1185">Reference proteome</keyword>
<keyword id="KW-0694">RNA-binding</keyword>
<keyword id="KW-0804">Transcription</keyword>
<keyword id="KW-0889">Transcription antitermination</keyword>
<keyword id="KW-0805">Transcription regulation</keyword>
<reference key="1">
    <citation type="journal article" date="2002" name="Proc. Natl. Acad. Sci. U.S.A.">
        <title>Genome sequence of Streptococcus mutans UA159, a cariogenic dental pathogen.</title>
        <authorList>
            <person name="Ajdic D.J."/>
            <person name="McShan W.M."/>
            <person name="McLaughlin R.E."/>
            <person name="Savic G."/>
            <person name="Chang J."/>
            <person name="Carson M.B."/>
            <person name="Primeaux C."/>
            <person name="Tian R."/>
            <person name="Kenton S."/>
            <person name="Jia H.G."/>
            <person name="Lin S.P."/>
            <person name="Qian Y."/>
            <person name="Li S."/>
            <person name="Zhu H."/>
            <person name="Najar F.Z."/>
            <person name="Lai H."/>
            <person name="White J."/>
            <person name="Roe B.A."/>
            <person name="Ferretti J.J."/>
        </authorList>
    </citation>
    <scope>NUCLEOTIDE SEQUENCE [LARGE SCALE GENOMIC DNA]</scope>
    <source>
        <strain>ATCC 700610 / UA159</strain>
    </source>
</reference>